<feature type="chain" id="PRO_0000350659" description="Glycerol-1-phosphate dehydrogenase [NAD(P)+]">
    <location>
        <begin position="1"/>
        <end position="334"/>
    </location>
</feature>
<feature type="binding site" evidence="1">
    <location>
        <begin position="77"/>
        <end position="81"/>
    </location>
    <ligand>
        <name>NAD(+)</name>
        <dbReference type="ChEBI" id="CHEBI:57540"/>
    </ligand>
</feature>
<feature type="binding site" evidence="1">
    <location>
        <begin position="99"/>
        <end position="102"/>
    </location>
    <ligand>
        <name>NAD(+)</name>
        <dbReference type="ChEBI" id="CHEBI:57540"/>
    </ligand>
</feature>
<feature type="binding site" evidence="1">
    <location>
        <position position="104"/>
    </location>
    <ligand>
        <name>substrate</name>
    </ligand>
</feature>
<feature type="binding site" evidence="1">
    <location>
        <position position="108"/>
    </location>
    <ligand>
        <name>NAD(+)</name>
        <dbReference type="ChEBI" id="CHEBI:57540"/>
    </ligand>
</feature>
<feature type="binding site" evidence="1">
    <location>
        <position position="147"/>
    </location>
    <ligand>
        <name>substrate</name>
    </ligand>
</feature>
<feature type="binding site" evidence="1">
    <location>
        <position position="147"/>
    </location>
    <ligand>
        <name>Zn(2+)</name>
        <dbReference type="ChEBI" id="CHEBI:29105"/>
        <note>catalytic</note>
    </ligand>
</feature>
<feature type="binding site" evidence="1">
    <location>
        <position position="225"/>
    </location>
    <ligand>
        <name>Zn(2+)</name>
        <dbReference type="ChEBI" id="CHEBI:29105"/>
        <note>catalytic</note>
    </ligand>
</feature>
<feature type="binding site" evidence="1">
    <location>
        <position position="229"/>
    </location>
    <ligand>
        <name>substrate</name>
    </ligand>
</feature>
<feature type="binding site" evidence="1">
    <location>
        <position position="246"/>
    </location>
    <ligand>
        <name>Zn(2+)</name>
        <dbReference type="ChEBI" id="CHEBI:29105"/>
        <note>catalytic</note>
    </ligand>
</feature>
<accession>A6URL4</accession>
<sequence length="334" mass="37018">MIVIPRYSLIKEKASERLPELLENLNLKKPLVITGKNTKKYSKGFEFIYYDEIDIYNEEGFQKIGKEYDSIIGIGGGKPIDIGKIISNKSKKPFVSVPTTASNDGIASPIVSLTQPSYLAESPIAIVADIDIIRESPKKLLSAGMGDIVSNITAVLDWELGKIEMNEKYSDSSGIFSKTIAIELIDYVLNYDLKEYPKKLVKSLIGSGISIAIAHSSRPASGSEHLFSHALDNLKNKYELNINSLHGEQCGLGTIIISQMYYEEGRIDFKTVEKVKNSLKAVNAPVTGKKLGFDEDLLIEALSSAHKVRKRHTILRNGLSKEKAREILEKSEII</sequence>
<evidence type="ECO:0000255" key="1">
    <source>
        <dbReference type="HAMAP-Rule" id="MF_00497"/>
    </source>
</evidence>
<reference key="1">
    <citation type="submission" date="2007-06" db="EMBL/GenBank/DDBJ databases">
        <title>Complete sequence of Methanococcus vannielii SB.</title>
        <authorList>
            <consortium name="US DOE Joint Genome Institute"/>
            <person name="Copeland A."/>
            <person name="Lucas S."/>
            <person name="Lapidus A."/>
            <person name="Barry K."/>
            <person name="Glavina del Rio T."/>
            <person name="Dalin E."/>
            <person name="Tice H."/>
            <person name="Pitluck S."/>
            <person name="Chain P."/>
            <person name="Malfatti S."/>
            <person name="Shin M."/>
            <person name="Vergez L."/>
            <person name="Schmutz J."/>
            <person name="Larimer F."/>
            <person name="Land M."/>
            <person name="Hauser L."/>
            <person name="Kyrpides N."/>
            <person name="Anderson I."/>
            <person name="Sieprawska-Lupa M."/>
            <person name="Whitman W.B."/>
            <person name="Richardson P."/>
        </authorList>
    </citation>
    <scope>NUCLEOTIDE SEQUENCE [LARGE SCALE GENOMIC DNA]</scope>
    <source>
        <strain>ATCC 35089 / DSM 1224 / JCM 13029 / OCM 148 / SB</strain>
    </source>
</reference>
<protein>
    <recommendedName>
        <fullName evidence="1">Glycerol-1-phosphate dehydrogenase [NAD(P)+]</fullName>
        <shortName evidence="1">G1P dehydrogenase</shortName>
        <shortName evidence="1">G1PDH</shortName>
        <ecNumber evidence="1">1.1.1.261</ecNumber>
    </recommendedName>
    <alternativeName>
        <fullName evidence="1">Enantiomeric glycerophosphate synthase</fullName>
    </alternativeName>
    <alternativeName>
        <fullName evidence="1">sn-glycerol-1-phosphate dehydrogenase</fullName>
    </alternativeName>
</protein>
<name>G1PDH_METVS</name>
<dbReference type="EC" id="1.1.1.261" evidence="1"/>
<dbReference type="EMBL" id="CP000742">
    <property type="protein sequence ID" value="ABR55136.1"/>
    <property type="molecule type" value="Genomic_DNA"/>
</dbReference>
<dbReference type="RefSeq" id="WP_012066051.1">
    <property type="nucleotide sequence ID" value="NC_009634.1"/>
</dbReference>
<dbReference type="SMR" id="A6URL4"/>
<dbReference type="STRING" id="406327.Mevan_1239"/>
<dbReference type="GeneID" id="5324937"/>
<dbReference type="KEGG" id="mvn:Mevan_1239"/>
<dbReference type="eggNOG" id="arCOG00982">
    <property type="taxonomic scope" value="Archaea"/>
</dbReference>
<dbReference type="HOGENOM" id="CLU_038362_0_0_2"/>
<dbReference type="OrthoDB" id="8656at2157"/>
<dbReference type="UniPathway" id="UPA00940"/>
<dbReference type="Proteomes" id="UP000001107">
    <property type="component" value="Chromosome"/>
</dbReference>
<dbReference type="GO" id="GO:0005737">
    <property type="term" value="C:cytoplasm"/>
    <property type="evidence" value="ECO:0007669"/>
    <property type="project" value="UniProtKB-SubCell"/>
</dbReference>
<dbReference type="GO" id="GO:0106357">
    <property type="term" value="F:glycerol-1-phosphate dehydrogenase (NAD+) activity"/>
    <property type="evidence" value="ECO:0007669"/>
    <property type="project" value="RHEA"/>
</dbReference>
<dbReference type="GO" id="GO:0106358">
    <property type="term" value="F:glycerol-1-phosphate dehydrogenase (NADP+) activity"/>
    <property type="evidence" value="ECO:0007669"/>
    <property type="project" value="RHEA"/>
</dbReference>
<dbReference type="GO" id="GO:0046872">
    <property type="term" value="F:metal ion binding"/>
    <property type="evidence" value="ECO:0007669"/>
    <property type="project" value="UniProtKB-KW"/>
</dbReference>
<dbReference type="GO" id="GO:0006650">
    <property type="term" value="P:glycerophospholipid metabolic process"/>
    <property type="evidence" value="ECO:0007669"/>
    <property type="project" value="UniProtKB-UniRule"/>
</dbReference>
<dbReference type="GO" id="GO:0008654">
    <property type="term" value="P:phospholipid biosynthetic process"/>
    <property type="evidence" value="ECO:0007669"/>
    <property type="project" value="UniProtKB-KW"/>
</dbReference>
<dbReference type="Gene3D" id="3.40.50.1970">
    <property type="match status" value="1"/>
</dbReference>
<dbReference type="Gene3D" id="1.20.1090.10">
    <property type="entry name" value="Dehydroquinate synthase-like - alpha domain"/>
    <property type="match status" value="1"/>
</dbReference>
<dbReference type="HAMAP" id="MF_00497_A">
    <property type="entry name" value="G1P_dehydrogenase_A"/>
    <property type="match status" value="1"/>
</dbReference>
<dbReference type="InterPro" id="IPR023002">
    <property type="entry name" value="G1P_dehydrogenase_arc"/>
</dbReference>
<dbReference type="InterPro" id="IPR032837">
    <property type="entry name" value="G1PDH"/>
</dbReference>
<dbReference type="InterPro" id="IPR016205">
    <property type="entry name" value="Glycerol_DH"/>
</dbReference>
<dbReference type="PANTHER" id="PTHR43616">
    <property type="entry name" value="GLYCEROL DEHYDROGENASE"/>
    <property type="match status" value="1"/>
</dbReference>
<dbReference type="PANTHER" id="PTHR43616:SF5">
    <property type="entry name" value="GLYCEROL DEHYDROGENASE 1"/>
    <property type="match status" value="1"/>
</dbReference>
<dbReference type="Pfam" id="PF13685">
    <property type="entry name" value="Fe-ADH_2"/>
    <property type="match status" value="1"/>
</dbReference>
<dbReference type="PIRSF" id="PIRSF000112">
    <property type="entry name" value="Glycerol_dehydrogenase"/>
    <property type="match status" value="1"/>
</dbReference>
<dbReference type="SUPFAM" id="SSF56796">
    <property type="entry name" value="Dehydroquinate synthase-like"/>
    <property type="match status" value="1"/>
</dbReference>
<keyword id="KW-0963">Cytoplasm</keyword>
<keyword id="KW-0444">Lipid biosynthesis</keyword>
<keyword id="KW-0443">Lipid metabolism</keyword>
<keyword id="KW-0479">Metal-binding</keyword>
<keyword id="KW-0520">NAD</keyword>
<keyword id="KW-0521">NADP</keyword>
<keyword id="KW-0560">Oxidoreductase</keyword>
<keyword id="KW-0594">Phospholipid biosynthesis</keyword>
<keyword id="KW-1208">Phospholipid metabolism</keyword>
<keyword id="KW-0862">Zinc</keyword>
<proteinExistence type="inferred from homology"/>
<comment type="function">
    <text evidence="1">Catalyzes the NAD(P)H-dependent reduction of dihydroxyacetonephosphate (DHAP or glycerone phosphate) to glycerol 1-phosphate (G1P). The G1P thus generated is used as the glycerophosphate backbone of phospholipids in the cellular membranes of Archaea.</text>
</comment>
<comment type="catalytic activity">
    <reaction evidence="1">
        <text>sn-glycerol 1-phosphate + NAD(+) = dihydroxyacetone phosphate + NADH + H(+)</text>
        <dbReference type="Rhea" id="RHEA:21412"/>
        <dbReference type="ChEBI" id="CHEBI:15378"/>
        <dbReference type="ChEBI" id="CHEBI:57540"/>
        <dbReference type="ChEBI" id="CHEBI:57642"/>
        <dbReference type="ChEBI" id="CHEBI:57685"/>
        <dbReference type="ChEBI" id="CHEBI:57945"/>
        <dbReference type="EC" id="1.1.1.261"/>
    </reaction>
</comment>
<comment type="catalytic activity">
    <reaction evidence="1">
        <text>sn-glycerol 1-phosphate + NADP(+) = dihydroxyacetone phosphate + NADPH + H(+)</text>
        <dbReference type="Rhea" id="RHEA:21416"/>
        <dbReference type="ChEBI" id="CHEBI:15378"/>
        <dbReference type="ChEBI" id="CHEBI:57642"/>
        <dbReference type="ChEBI" id="CHEBI:57685"/>
        <dbReference type="ChEBI" id="CHEBI:57783"/>
        <dbReference type="ChEBI" id="CHEBI:58349"/>
        <dbReference type="EC" id="1.1.1.261"/>
    </reaction>
</comment>
<comment type="cofactor">
    <cofactor evidence="1">
        <name>Zn(2+)</name>
        <dbReference type="ChEBI" id="CHEBI:29105"/>
    </cofactor>
    <text evidence="1">Binds 1 zinc ion per subunit.</text>
</comment>
<comment type="pathway">
    <text evidence="1">Membrane lipid metabolism; glycerophospholipid metabolism.</text>
</comment>
<comment type="subcellular location">
    <subcellularLocation>
        <location evidence="1">Cytoplasm</location>
    </subcellularLocation>
</comment>
<comment type="similarity">
    <text evidence="1">Belongs to the glycerol-1-phosphate dehydrogenase family.</text>
</comment>
<gene>
    <name evidence="1" type="primary">egsA</name>
    <name type="ordered locus">Mevan_1239</name>
</gene>
<organism>
    <name type="scientific">Methanococcus vannielii (strain ATCC 35089 / DSM 1224 / JCM 13029 / OCM 148 / SB)</name>
    <dbReference type="NCBI Taxonomy" id="406327"/>
    <lineage>
        <taxon>Archaea</taxon>
        <taxon>Methanobacteriati</taxon>
        <taxon>Methanobacteriota</taxon>
        <taxon>Methanomada group</taxon>
        <taxon>Methanococci</taxon>
        <taxon>Methanococcales</taxon>
        <taxon>Methanococcaceae</taxon>
        <taxon>Methanococcus</taxon>
    </lineage>
</organism>